<proteinExistence type="inferred from homology"/>
<dbReference type="EMBL" id="U93358">
    <property type="protein sequence ID" value="AAB96892.1"/>
    <property type="molecule type" value="Genomic_DNA"/>
</dbReference>
<dbReference type="EMBL" id="CP002536">
    <property type="protein sequence ID" value="ADY27041.1"/>
    <property type="molecule type" value="Genomic_DNA"/>
</dbReference>
<dbReference type="RefSeq" id="WP_013615649.1">
    <property type="nucleotide sequence ID" value="NC_015161.1"/>
</dbReference>
<dbReference type="SMR" id="O34136"/>
<dbReference type="STRING" id="693977.Deipr_1909"/>
<dbReference type="KEGG" id="dpt:Deipr_1909"/>
<dbReference type="eggNOG" id="COG0484">
    <property type="taxonomic scope" value="Bacteria"/>
</dbReference>
<dbReference type="HOGENOM" id="CLU_017633_0_0_0"/>
<dbReference type="OrthoDB" id="9779889at2"/>
<dbReference type="Proteomes" id="UP000007718">
    <property type="component" value="Chromosome"/>
</dbReference>
<dbReference type="GO" id="GO:0005737">
    <property type="term" value="C:cytoplasm"/>
    <property type="evidence" value="ECO:0007669"/>
    <property type="project" value="UniProtKB-SubCell"/>
</dbReference>
<dbReference type="GO" id="GO:0051082">
    <property type="term" value="F:unfolded protein binding"/>
    <property type="evidence" value="ECO:0007669"/>
    <property type="project" value="InterPro"/>
</dbReference>
<dbReference type="GO" id="GO:0051085">
    <property type="term" value="P:chaperone cofactor-dependent protein refolding"/>
    <property type="evidence" value="ECO:0007669"/>
    <property type="project" value="TreeGrafter"/>
</dbReference>
<dbReference type="GO" id="GO:0006260">
    <property type="term" value="P:DNA replication"/>
    <property type="evidence" value="ECO:0007669"/>
    <property type="project" value="UniProtKB-KW"/>
</dbReference>
<dbReference type="GO" id="GO:0042026">
    <property type="term" value="P:protein refolding"/>
    <property type="evidence" value="ECO:0007669"/>
    <property type="project" value="TreeGrafter"/>
</dbReference>
<dbReference type="CDD" id="cd06257">
    <property type="entry name" value="DnaJ"/>
    <property type="match status" value="1"/>
</dbReference>
<dbReference type="CDD" id="cd10747">
    <property type="entry name" value="DnaJ_C"/>
    <property type="match status" value="1"/>
</dbReference>
<dbReference type="FunFam" id="2.60.260.20:FF:000013">
    <property type="entry name" value="DnaJ subfamily B member 11"/>
    <property type="match status" value="1"/>
</dbReference>
<dbReference type="FunFam" id="1.10.287.110:FF:000031">
    <property type="entry name" value="Molecular chaperone DnaJ"/>
    <property type="match status" value="1"/>
</dbReference>
<dbReference type="Gene3D" id="1.10.287.110">
    <property type="entry name" value="DnaJ domain"/>
    <property type="match status" value="1"/>
</dbReference>
<dbReference type="Gene3D" id="2.60.260.20">
    <property type="entry name" value="Urease metallochaperone UreE, N-terminal domain"/>
    <property type="match status" value="2"/>
</dbReference>
<dbReference type="InterPro" id="IPR002939">
    <property type="entry name" value="DnaJ_C"/>
</dbReference>
<dbReference type="InterPro" id="IPR001623">
    <property type="entry name" value="DnaJ_domain"/>
</dbReference>
<dbReference type="InterPro" id="IPR018253">
    <property type="entry name" value="DnaJ_domain_CS"/>
</dbReference>
<dbReference type="InterPro" id="IPR008971">
    <property type="entry name" value="HSP40/DnaJ_pept-bd"/>
</dbReference>
<dbReference type="InterPro" id="IPR036869">
    <property type="entry name" value="J_dom_sf"/>
</dbReference>
<dbReference type="PANTHER" id="PTHR43096">
    <property type="entry name" value="DNAJ HOMOLOG 1, MITOCHONDRIAL-RELATED"/>
    <property type="match status" value="1"/>
</dbReference>
<dbReference type="PANTHER" id="PTHR43096:SF52">
    <property type="entry name" value="DNAJ HOMOLOG 1, MITOCHONDRIAL-RELATED"/>
    <property type="match status" value="1"/>
</dbReference>
<dbReference type="Pfam" id="PF00226">
    <property type="entry name" value="DnaJ"/>
    <property type="match status" value="1"/>
</dbReference>
<dbReference type="Pfam" id="PF01556">
    <property type="entry name" value="DnaJ_C"/>
    <property type="match status" value="1"/>
</dbReference>
<dbReference type="PRINTS" id="PR00625">
    <property type="entry name" value="JDOMAIN"/>
</dbReference>
<dbReference type="SMART" id="SM00271">
    <property type="entry name" value="DnaJ"/>
    <property type="match status" value="1"/>
</dbReference>
<dbReference type="SUPFAM" id="SSF46565">
    <property type="entry name" value="Chaperone J-domain"/>
    <property type="match status" value="1"/>
</dbReference>
<dbReference type="SUPFAM" id="SSF49493">
    <property type="entry name" value="HSP40/DnaJ peptide-binding domain"/>
    <property type="match status" value="2"/>
</dbReference>
<dbReference type="PROSITE" id="PS00636">
    <property type="entry name" value="DNAJ_1"/>
    <property type="match status" value="1"/>
</dbReference>
<dbReference type="PROSITE" id="PS50076">
    <property type="entry name" value="DNAJ_2"/>
    <property type="match status" value="1"/>
</dbReference>
<sequence length="310" mass="32918">MAYKDYYEVLGVSRSASDSDIKSAYRKLAKQYHPDKNAGDESAAEKFKEIGEAYAVLSDPQKRQAYDQFGHTGQVPPGGYPGGGFQGGDFGGFDPSQFSDFFQEMFGGRAAGMGGRGGFTSPDGRPIDLEDLFGGLGGMGGAAQGGGRRFVQNVEGELQVSLSEAFEGSDEIINVDGRRLSLRVPAGTRDGARLRLAGQGPGGGDVLLTIRVLEDARFELDGDDLTTSVDVPAPVAALGGAVTVQTITGSGQLNVPAGSSGGRRMRLKGQGWPKKSGGRGDLYVRLNVTVPKELSEEERQLYEQLRDLQR</sequence>
<accession>O34136</accession>
<accession>F0RMA4</accession>
<organism>
    <name type="scientific">Deinococcus proteolyticus (strain ATCC 35074 / DSM 20540 / JCM 6276 / NBRC 101906 / NCIMB 13154 / VKM Ac-1939 / CCM 2703 / MRP)</name>
    <dbReference type="NCBI Taxonomy" id="693977"/>
    <lineage>
        <taxon>Bacteria</taxon>
        <taxon>Thermotogati</taxon>
        <taxon>Deinococcota</taxon>
        <taxon>Deinococci</taxon>
        <taxon>Deinococcales</taxon>
        <taxon>Deinococcaceae</taxon>
        <taxon>Deinococcus</taxon>
    </lineage>
</organism>
<evidence type="ECO:0000250" key="1"/>
<evidence type="ECO:0000255" key="2">
    <source>
        <dbReference type="PROSITE-ProRule" id="PRU00286"/>
    </source>
</evidence>
<evidence type="ECO:0000256" key="3">
    <source>
        <dbReference type="SAM" id="MobiDB-lite"/>
    </source>
</evidence>
<evidence type="ECO:0000305" key="4"/>
<gene>
    <name type="primary">dnaJ</name>
    <name type="ordered locus">Deipr_1909</name>
</gene>
<keyword id="KW-0143">Chaperone</keyword>
<keyword id="KW-0963">Cytoplasm</keyword>
<keyword id="KW-0235">DNA replication</keyword>
<keyword id="KW-1185">Reference proteome</keyword>
<keyword id="KW-0677">Repeat</keyword>
<keyword id="KW-0346">Stress response</keyword>
<protein>
    <recommendedName>
        <fullName>Chaperone protein DnaJ</fullName>
    </recommendedName>
</protein>
<comment type="function">
    <text evidence="1">Participates actively in the response to hyperosmotic and heat shock by preventing the aggregation of stress-denatured proteins and by disaggregating proteins, also in an autonomous, DnaK-independent fashion. Unfolded proteins bind initially to DnaJ; upon interaction with the DnaJ-bound protein, DnaK hydrolyzes its bound ATP, resulting in the formation of a stable complex. GrpE releases ADP from DnaK; ATP binding to DnaK triggers the release of the substrate protein, thus completing the reaction cycle. Several rounds of ATP-dependent interactions between DnaJ, DnaK and GrpE are required for fully efficient folding. Also involved, together with DnaK and GrpE, in the DNA replication of plasmids through activation of initiation proteins (By similarity).</text>
</comment>
<comment type="subunit">
    <text evidence="1">Homodimer.</text>
</comment>
<comment type="subcellular location">
    <subcellularLocation>
        <location evidence="1">Cytoplasm</location>
    </subcellularLocation>
</comment>
<comment type="domain">
    <text evidence="1">The J domain is necessary and sufficient to stimulate DnaK ATPase activity. Zinc center 1 plays an important role in the autonomous, DnaK-independent chaperone activity of DnaJ. Zinc center 2 is essential for interaction with DnaK and for DnaJ activity (By similarity).</text>
</comment>
<comment type="similarity">
    <text evidence="4">Belongs to the DnaJ family.</text>
</comment>
<feature type="chain" id="PRO_0000070773" description="Chaperone protein DnaJ">
    <location>
        <begin position="1"/>
        <end position="310"/>
    </location>
</feature>
<feature type="domain" description="J" evidence="2">
    <location>
        <begin position="5"/>
        <end position="70"/>
    </location>
</feature>
<feature type="region of interest" description="Disordered" evidence="3">
    <location>
        <begin position="257"/>
        <end position="276"/>
    </location>
</feature>
<feature type="sequence conflict" description="In Ref. 1; AAB96892." evidence="4" ref="1">
    <original>GGYPGGGFQGGDFGGFDPSQFSDFFQEMFGGRAAGMGG</original>
    <variation>ALPRRRLSGRRLRRVRPQPVQRLFPGDVRGPGRWHGS</variation>
    <location>
        <begin position="78"/>
        <end position="115"/>
    </location>
</feature>
<feature type="sequence conflict" description="In Ref. 1; AAB96892." evidence="4" ref="1">
    <original>AQGGGR</original>
    <variation>LRAEAG</variation>
    <location>
        <begin position="143"/>
        <end position="148"/>
    </location>
</feature>
<feature type="sequence conflict" description="In Ref. 1; AAB96892." evidence="4" ref="1">
    <location>
        <position position="237"/>
    </location>
</feature>
<feature type="sequence conflict" description="In Ref. 1; AAB96892." evidence="4" ref="1">
    <original>RR</original>
    <variation>P</variation>
    <location>
        <begin position="263"/>
        <end position="264"/>
    </location>
</feature>
<feature type="sequence conflict" description="In Ref. 1; AAB96892." evidence="4" ref="1">
    <original>QL</original>
    <variation>HV</variation>
    <location>
        <begin position="304"/>
        <end position="305"/>
    </location>
</feature>
<name>DNAJ_DEIPM</name>
<reference key="1">
    <citation type="journal article" date="1997" name="J. Mol. Evol.">
        <title>The sequences of heat shock protein 40 (DnaJ) homologs provide evidence for a close evolutionary relationship between the Deinococcus-thermus group and cyanobacteria.</title>
        <authorList>
            <person name="Bustard K."/>
            <person name="Gupta R.S."/>
        </authorList>
    </citation>
    <scope>NUCLEOTIDE SEQUENCE [GENOMIC DNA]</scope>
    <source>
        <strain>ATCC 35074 / DSM 20540 / JCM 6276 / NBRC 101906 / NCIMB 13154 / VKM Ac-1939 / CCM 2703 / MRP</strain>
    </source>
</reference>
<reference key="2">
    <citation type="submission" date="2011-02" db="EMBL/GenBank/DDBJ databases">
        <title>The complete sequence of chromosome of Deinococcus proteolyticus DSM 20540.</title>
        <authorList>
            <consortium name="US DOE Joint Genome Institute (JGI-PGF)"/>
            <person name="Lucas S."/>
            <person name="Copeland A."/>
            <person name="Lapidus A."/>
            <person name="Bruce D."/>
            <person name="Goodwin L."/>
            <person name="Pitluck S."/>
            <person name="Kyrpides N."/>
            <person name="Mavromatis K."/>
            <person name="Pagani I."/>
            <person name="Ivanova N."/>
            <person name="Ovchinnikova G."/>
            <person name="Zeytun A."/>
            <person name="Detter J.C."/>
            <person name="Han C."/>
            <person name="Land M."/>
            <person name="Hauser L."/>
            <person name="Markowitz V."/>
            <person name="Cheng J.-F."/>
            <person name="Hugenholtz P."/>
            <person name="Woyke T."/>
            <person name="Wu D."/>
            <person name="Pukall R."/>
            <person name="Steenblock K."/>
            <person name="Brambilla E."/>
            <person name="Klenk H.-P."/>
            <person name="Eisen J.A."/>
        </authorList>
    </citation>
    <scope>NUCLEOTIDE SEQUENCE [LARGE SCALE GENOMIC DNA]</scope>
    <source>
        <strain>ATCC 35074 / DSM 20540 / JCM 6276 / NBRC 101906 / NCIMB 13154 / VKM Ac-1939 / CCM 2703 / MRP</strain>
    </source>
</reference>